<feature type="chain" id="PRO_0000143037" description="Porphobilinogen deaminase">
    <location>
        <begin position="1"/>
        <end position="326"/>
    </location>
</feature>
<feature type="modified residue" description="S-(dipyrrolylmethanemethyl)cysteine" evidence="1">
    <location>
        <position position="251"/>
    </location>
</feature>
<sequence length="326" mass="35526">MGEETLRIAGRRSKLAVIQSESVKEIVQREFPNYTCTVLAKQTLGDQVQSKPLYAFGGKALWTKELEDLLYEEDLDQRIDMIVHSLKDMPTQLPEGFELGAITKRVDPSDCLVMAAGSPYKTLGDLPNGSVVGTSSIRRSAQLRRRYPHLVFASVRGNIQTRLKKLDDPENECKCIILATAGLVRLGLESRITQRFDSTIMLHAVGQGALGIETRTGDERLQAILAKVADRNSTICCLAERSLMRTLEGGCSVPIGVYSTFDEETSMLTLDGLVVSVDGADAAEATVSYKIKSDKEDAIACGQLLAAKLLEAGAKKILDAIHLPEA</sequence>
<organism>
    <name type="scientific">Eremothecium gossypii (strain ATCC 10895 / CBS 109.51 / FGSC 9923 / NRRL Y-1056)</name>
    <name type="common">Yeast</name>
    <name type="synonym">Ashbya gossypii</name>
    <dbReference type="NCBI Taxonomy" id="284811"/>
    <lineage>
        <taxon>Eukaryota</taxon>
        <taxon>Fungi</taxon>
        <taxon>Dikarya</taxon>
        <taxon>Ascomycota</taxon>
        <taxon>Saccharomycotina</taxon>
        <taxon>Saccharomycetes</taxon>
        <taxon>Saccharomycetales</taxon>
        <taxon>Saccharomycetaceae</taxon>
        <taxon>Eremothecium</taxon>
    </lineage>
</organism>
<accession>Q75DY0</accession>
<keyword id="KW-0350">Heme biosynthesis</keyword>
<keyword id="KW-0627">Porphyrin biosynthesis</keyword>
<keyword id="KW-1185">Reference proteome</keyword>
<keyword id="KW-0808">Transferase</keyword>
<name>HEM3_EREGS</name>
<dbReference type="EC" id="2.5.1.61"/>
<dbReference type="EMBL" id="AE016815">
    <property type="protein sequence ID" value="AAS50664.1"/>
    <property type="molecule type" value="Genomic_DNA"/>
</dbReference>
<dbReference type="RefSeq" id="NP_982840.1">
    <property type="nucleotide sequence ID" value="NM_208193.1"/>
</dbReference>
<dbReference type="SMR" id="Q75DY0"/>
<dbReference type="FunCoup" id="Q75DY0">
    <property type="interactions" value="665"/>
</dbReference>
<dbReference type="STRING" id="284811.Q75DY0"/>
<dbReference type="EnsemblFungi" id="AAS50664">
    <property type="protein sequence ID" value="AAS50664"/>
    <property type="gene ID" value="AGOS_ABL107C"/>
</dbReference>
<dbReference type="GeneID" id="4618920"/>
<dbReference type="KEGG" id="ago:AGOS_ABL107C"/>
<dbReference type="eggNOG" id="KOG2892">
    <property type="taxonomic scope" value="Eukaryota"/>
</dbReference>
<dbReference type="HOGENOM" id="CLU_019704_0_2_1"/>
<dbReference type="InParanoid" id="Q75DY0"/>
<dbReference type="OMA" id="NAHEWAG"/>
<dbReference type="OrthoDB" id="564646at2759"/>
<dbReference type="UniPathway" id="UPA00251">
    <property type="reaction ID" value="UER00319"/>
</dbReference>
<dbReference type="Proteomes" id="UP000000591">
    <property type="component" value="Chromosome II"/>
</dbReference>
<dbReference type="GO" id="GO:0005737">
    <property type="term" value="C:cytoplasm"/>
    <property type="evidence" value="ECO:0000318"/>
    <property type="project" value="GO_Central"/>
</dbReference>
<dbReference type="GO" id="GO:0004418">
    <property type="term" value="F:hydroxymethylbilane synthase activity"/>
    <property type="evidence" value="ECO:0000318"/>
    <property type="project" value="GO_Central"/>
</dbReference>
<dbReference type="GO" id="GO:0006783">
    <property type="term" value="P:heme biosynthetic process"/>
    <property type="evidence" value="ECO:0000318"/>
    <property type="project" value="GO_Central"/>
</dbReference>
<dbReference type="GO" id="GO:0006782">
    <property type="term" value="P:protoporphyrinogen IX biosynthetic process"/>
    <property type="evidence" value="ECO:0007669"/>
    <property type="project" value="UniProtKB-UniPathway"/>
</dbReference>
<dbReference type="CDD" id="cd13645">
    <property type="entry name" value="PBP2_HuPBGD_like"/>
    <property type="match status" value="1"/>
</dbReference>
<dbReference type="FunFam" id="3.30.160.40:FF:000002">
    <property type="entry name" value="Porphobilinogen deaminase"/>
    <property type="match status" value="1"/>
</dbReference>
<dbReference type="FunFam" id="3.40.190.10:FF:000005">
    <property type="entry name" value="Porphobilinogen deaminase"/>
    <property type="match status" value="1"/>
</dbReference>
<dbReference type="Gene3D" id="3.40.190.10">
    <property type="entry name" value="Periplasmic binding protein-like II"/>
    <property type="match status" value="2"/>
</dbReference>
<dbReference type="Gene3D" id="3.30.160.40">
    <property type="entry name" value="Porphobilinogen deaminase, C-terminal domain"/>
    <property type="match status" value="1"/>
</dbReference>
<dbReference type="InterPro" id="IPR000860">
    <property type="entry name" value="HemC"/>
</dbReference>
<dbReference type="InterPro" id="IPR022419">
    <property type="entry name" value="Porphobilin_deaminase_cofac_BS"/>
</dbReference>
<dbReference type="InterPro" id="IPR022417">
    <property type="entry name" value="Porphobilin_deaminase_N"/>
</dbReference>
<dbReference type="InterPro" id="IPR022418">
    <property type="entry name" value="Porphobilinogen_deaminase_C"/>
</dbReference>
<dbReference type="InterPro" id="IPR036803">
    <property type="entry name" value="Porphobilinogen_deaminase_C_sf"/>
</dbReference>
<dbReference type="NCBIfam" id="TIGR00212">
    <property type="entry name" value="hemC"/>
    <property type="match status" value="1"/>
</dbReference>
<dbReference type="PANTHER" id="PTHR11557">
    <property type="entry name" value="PORPHOBILINOGEN DEAMINASE"/>
    <property type="match status" value="1"/>
</dbReference>
<dbReference type="PANTHER" id="PTHR11557:SF0">
    <property type="entry name" value="PORPHOBILINOGEN DEAMINASE"/>
    <property type="match status" value="1"/>
</dbReference>
<dbReference type="Pfam" id="PF01379">
    <property type="entry name" value="Porphobil_deam"/>
    <property type="match status" value="1"/>
</dbReference>
<dbReference type="Pfam" id="PF03900">
    <property type="entry name" value="Porphobil_deamC"/>
    <property type="match status" value="1"/>
</dbReference>
<dbReference type="PIRSF" id="PIRSF001438">
    <property type="entry name" value="4pyrrol_synth_OHMeBilane_synth"/>
    <property type="match status" value="1"/>
</dbReference>
<dbReference type="PRINTS" id="PR00151">
    <property type="entry name" value="PORPHBDMNASE"/>
</dbReference>
<dbReference type="SUPFAM" id="SSF53850">
    <property type="entry name" value="Periplasmic binding protein-like II"/>
    <property type="match status" value="1"/>
</dbReference>
<dbReference type="SUPFAM" id="SSF54782">
    <property type="entry name" value="Porphobilinogen deaminase (hydroxymethylbilane synthase), C-terminal domain"/>
    <property type="match status" value="1"/>
</dbReference>
<dbReference type="PROSITE" id="PS00533">
    <property type="entry name" value="PORPHOBILINOGEN_DEAM"/>
    <property type="match status" value="1"/>
</dbReference>
<evidence type="ECO:0000250" key="1"/>
<evidence type="ECO:0000305" key="2"/>
<reference key="1">
    <citation type="journal article" date="2004" name="Science">
        <title>The Ashbya gossypii genome as a tool for mapping the ancient Saccharomyces cerevisiae genome.</title>
        <authorList>
            <person name="Dietrich F.S."/>
            <person name="Voegeli S."/>
            <person name="Brachat S."/>
            <person name="Lerch A."/>
            <person name="Gates K."/>
            <person name="Steiner S."/>
            <person name="Mohr C."/>
            <person name="Poehlmann R."/>
            <person name="Luedi P."/>
            <person name="Choi S."/>
            <person name="Wing R.A."/>
            <person name="Flavier A."/>
            <person name="Gaffney T.D."/>
            <person name="Philippsen P."/>
        </authorList>
    </citation>
    <scope>NUCLEOTIDE SEQUENCE [LARGE SCALE GENOMIC DNA]</scope>
    <source>
        <strain>ATCC 10895 / CBS 109.51 / FGSC 9923 / NRRL Y-1056</strain>
    </source>
</reference>
<reference key="2">
    <citation type="journal article" date="2013" name="G3 (Bethesda)">
        <title>Genomes of Ashbya fungi isolated from insects reveal four mating-type loci, numerous translocations, lack of transposons, and distinct gene duplications.</title>
        <authorList>
            <person name="Dietrich F.S."/>
            <person name="Voegeli S."/>
            <person name="Kuo S."/>
            <person name="Philippsen P."/>
        </authorList>
    </citation>
    <scope>GENOME REANNOTATION</scope>
    <source>
        <strain>ATCC 10895 / CBS 109.51 / FGSC 9923 / NRRL Y-1056</strain>
    </source>
</reference>
<comment type="function">
    <text evidence="1">Tetrapolymerization of the monopyrrole PBG into the hydroxymethylbilane pre-uroporphyrinogen in several discrete steps.</text>
</comment>
<comment type="catalytic activity">
    <reaction>
        <text>4 porphobilinogen + H2O = hydroxymethylbilane + 4 NH4(+)</text>
        <dbReference type="Rhea" id="RHEA:13185"/>
        <dbReference type="ChEBI" id="CHEBI:15377"/>
        <dbReference type="ChEBI" id="CHEBI:28938"/>
        <dbReference type="ChEBI" id="CHEBI:57845"/>
        <dbReference type="ChEBI" id="CHEBI:58126"/>
        <dbReference type="EC" id="2.5.1.61"/>
    </reaction>
</comment>
<comment type="cofactor">
    <cofactor evidence="1">
        <name>dipyrromethane</name>
        <dbReference type="ChEBI" id="CHEBI:60342"/>
    </cofactor>
    <text evidence="1">Binds 1 dipyrromethane group covalently.</text>
</comment>
<comment type="pathway">
    <text>Porphyrin-containing compound metabolism; protoporphyrin-IX biosynthesis; coproporphyrinogen-III from 5-aminolevulinate: step 2/4.</text>
</comment>
<comment type="miscellaneous">
    <text>The porphobilinogen subunits are added to the dipyrromethan group.</text>
</comment>
<comment type="similarity">
    <text evidence="2">Belongs to the HMBS family.</text>
</comment>
<gene>
    <name type="primary">HEM3</name>
    <name type="ordered locus">ABL107C</name>
</gene>
<proteinExistence type="inferred from homology"/>
<protein>
    <recommendedName>
        <fullName>Porphobilinogen deaminase</fullName>
        <shortName>PBG</shortName>
        <ecNumber>2.5.1.61</ecNumber>
    </recommendedName>
    <alternativeName>
        <fullName>Hydroxymethylbilane synthase</fullName>
        <shortName>HMBS</shortName>
    </alternativeName>
    <alternativeName>
        <fullName>Pre-uroporphyrinogen synthase</fullName>
    </alternativeName>
</protein>